<gene>
    <name evidence="1" type="primary">rbfA</name>
    <name type="ordered locus">Smed_3442</name>
</gene>
<comment type="function">
    <text evidence="1">One of several proteins that assist in the late maturation steps of the functional core of the 30S ribosomal subunit. Associates with free 30S ribosomal subunits (but not with 30S subunits that are part of 70S ribosomes or polysomes). Required for efficient processing of 16S rRNA. May interact with the 5'-terminal helix region of 16S rRNA.</text>
</comment>
<comment type="subunit">
    <text evidence="1">Monomer. Binds 30S ribosomal subunits, but not 50S ribosomal subunits or 70S ribosomes.</text>
</comment>
<comment type="subcellular location">
    <subcellularLocation>
        <location evidence="1">Cytoplasm</location>
    </subcellularLocation>
</comment>
<comment type="similarity">
    <text evidence="1">Belongs to the RbfA family.</text>
</comment>
<name>RBFA_SINMW</name>
<protein>
    <recommendedName>
        <fullName evidence="1">Ribosome-binding factor A</fullName>
    </recommendedName>
</protein>
<feature type="chain" id="PRO_1000000214" description="Ribosome-binding factor A">
    <location>
        <begin position="1"/>
        <end position="134"/>
    </location>
</feature>
<reference key="1">
    <citation type="submission" date="2007-06" db="EMBL/GenBank/DDBJ databases">
        <title>Complete sequence of Sinorhizobium medicae WSM419 chromosome.</title>
        <authorList>
            <consortium name="US DOE Joint Genome Institute"/>
            <person name="Copeland A."/>
            <person name="Lucas S."/>
            <person name="Lapidus A."/>
            <person name="Barry K."/>
            <person name="Glavina del Rio T."/>
            <person name="Dalin E."/>
            <person name="Tice H."/>
            <person name="Pitluck S."/>
            <person name="Chain P."/>
            <person name="Malfatti S."/>
            <person name="Shin M."/>
            <person name="Vergez L."/>
            <person name="Schmutz J."/>
            <person name="Larimer F."/>
            <person name="Land M."/>
            <person name="Hauser L."/>
            <person name="Kyrpides N."/>
            <person name="Mikhailova N."/>
            <person name="Reeve W.G."/>
            <person name="Richardson P."/>
        </authorList>
    </citation>
    <scope>NUCLEOTIDE SEQUENCE [LARGE SCALE GENOMIC DNA]</scope>
    <source>
        <strain>WSM419</strain>
    </source>
</reference>
<sequence length="134" mass="15109">MAKSTSSAPSQRMLRVGEQVRAAITQVLQRGDVRDPLIESTVISISEVRMSPDLKLATAYVTPLGVADHAAVIEALNKHAKFIRGRLGPHLRQMKYMPDVRFRDDTSFENYQKIDSLLRSPEVSRDLDRDSDEE</sequence>
<keyword id="KW-0963">Cytoplasm</keyword>
<keyword id="KW-0690">Ribosome biogenesis</keyword>
<organism>
    <name type="scientific">Sinorhizobium medicae (strain WSM419)</name>
    <name type="common">Ensifer medicae</name>
    <dbReference type="NCBI Taxonomy" id="366394"/>
    <lineage>
        <taxon>Bacteria</taxon>
        <taxon>Pseudomonadati</taxon>
        <taxon>Pseudomonadota</taxon>
        <taxon>Alphaproteobacteria</taxon>
        <taxon>Hyphomicrobiales</taxon>
        <taxon>Rhizobiaceae</taxon>
        <taxon>Sinorhizobium/Ensifer group</taxon>
        <taxon>Sinorhizobium</taxon>
    </lineage>
</organism>
<evidence type="ECO:0000255" key="1">
    <source>
        <dbReference type="HAMAP-Rule" id="MF_00003"/>
    </source>
</evidence>
<proteinExistence type="inferred from homology"/>
<accession>A6UF30</accession>
<dbReference type="EMBL" id="CP000738">
    <property type="protein sequence ID" value="ABR62260.1"/>
    <property type="molecule type" value="Genomic_DNA"/>
</dbReference>
<dbReference type="RefSeq" id="WP_012067640.1">
    <property type="nucleotide sequence ID" value="NC_009636.1"/>
</dbReference>
<dbReference type="RefSeq" id="YP_001329095.1">
    <property type="nucleotide sequence ID" value="NC_009636.1"/>
</dbReference>
<dbReference type="SMR" id="A6UF30"/>
<dbReference type="STRING" id="366394.Smed_3442"/>
<dbReference type="GeneID" id="61610993"/>
<dbReference type="KEGG" id="smd:Smed_3442"/>
<dbReference type="PATRIC" id="fig|366394.8.peg.6692"/>
<dbReference type="eggNOG" id="COG0858">
    <property type="taxonomic scope" value="Bacteria"/>
</dbReference>
<dbReference type="HOGENOM" id="CLU_089475_1_0_5"/>
<dbReference type="OrthoDB" id="9805051at2"/>
<dbReference type="Proteomes" id="UP000001108">
    <property type="component" value="Chromosome"/>
</dbReference>
<dbReference type="GO" id="GO:0005829">
    <property type="term" value="C:cytosol"/>
    <property type="evidence" value="ECO:0007669"/>
    <property type="project" value="TreeGrafter"/>
</dbReference>
<dbReference type="GO" id="GO:0043024">
    <property type="term" value="F:ribosomal small subunit binding"/>
    <property type="evidence" value="ECO:0007669"/>
    <property type="project" value="TreeGrafter"/>
</dbReference>
<dbReference type="GO" id="GO:0030490">
    <property type="term" value="P:maturation of SSU-rRNA"/>
    <property type="evidence" value="ECO:0007669"/>
    <property type="project" value="UniProtKB-UniRule"/>
</dbReference>
<dbReference type="Gene3D" id="3.30.300.20">
    <property type="match status" value="1"/>
</dbReference>
<dbReference type="HAMAP" id="MF_00003">
    <property type="entry name" value="RbfA"/>
    <property type="match status" value="1"/>
</dbReference>
<dbReference type="InterPro" id="IPR015946">
    <property type="entry name" value="KH_dom-like_a/b"/>
</dbReference>
<dbReference type="InterPro" id="IPR000238">
    <property type="entry name" value="RbfA"/>
</dbReference>
<dbReference type="InterPro" id="IPR023799">
    <property type="entry name" value="RbfA_dom_sf"/>
</dbReference>
<dbReference type="InterPro" id="IPR020053">
    <property type="entry name" value="Ribosome-bd_factorA_CS"/>
</dbReference>
<dbReference type="NCBIfam" id="NF001802">
    <property type="entry name" value="PRK00521.2-5"/>
    <property type="match status" value="1"/>
</dbReference>
<dbReference type="NCBIfam" id="TIGR00082">
    <property type="entry name" value="rbfA"/>
    <property type="match status" value="1"/>
</dbReference>
<dbReference type="PANTHER" id="PTHR33515">
    <property type="entry name" value="RIBOSOME-BINDING FACTOR A, CHLOROPLASTIC-RELATED"/>
    <property type="match status" value="1"/>
</dbReference>
<dbReference type="PANTHER" id="PTHR33515:SF1">
    <property type="entry name" value="RIBOSOME-BINDING FACTOR A, CHLOROPLASTIC-RELATED"/>
    <property type="match status" value="1"/>
</dbReference>
<dbReference type="Pfam" id="PF02033">
    <property type="entry name" value="RBFA"/>
    <property type="match status" value="1"/>
</dbReference>
<dbReference type="SUPFAM" id="SSF89919">
    <property type="entry name" value="Ribosome-binding factor A, RbfA"/>
    <property type="match status" value="1"/>
</dbReference>
<dbReference type="PROSITE" id="PS01319">
    <property type="entry name" value="RBFA"/>
    <property type="match status" value="1"/>
</dbReference>